<organism>
    <name type="scientific">Parabacteroides distasonis (strain ATCC 8503 / DSM 20701 / CIP 104284 / JCM 5825 / NCTC 11152)</name>
    <dbReference type="NCBI Taxonomy" id="435591"/>
    <lineage>
        <taxon>Bacteria</taxon>
        <taxon>Pseudomonadati</taxon>
        <taxon>Bacteroidota</taxon>
        <taxon>Bacteroidia</taxon>
        <taxon>Bacteroidales</taxon>
        <taxon>Tannerellaceae</taxon>
        <taxon>Parabacteroides</taxon>
    </lineage>
</organism>
<proteinExistence type="inferred from homology"/>
<protein>
    <recommendedName>
        <fullName evidence="1">Glucosamine-6-phosphate deaminase</fullName>
        <ecNumber evidence="1">3.5.99.6</ecNumber>
    </recommendedName>
    <alternativeName>
        <fullName evidence="1">GlcN6P deaminase</fullName>
        <shortName evidence="1">GNPDA</shortName>
    </alternativeName>
    <alternativeName>
        <fullName evidence="1">Glucosamine-6-phosphate isomerase</fullName>
    </alternativeName>
</protein>
<gene>
    <name evidence="1" type="primary">nagB</name>
    <name type="ordered locus">BDI_3568</name>
</gene>
<keyword id="KW-0021">Allosteric enzyme</keyword>
<keyword id="KW-0119">Carbohydrate metabolism</keyword>
<keyword id="KW-0378">Hydrolase</keyword>
<keyword id="KW-1185">Reference proteome</keyword>
<sequence length="270" mass="29662">MRLIIEPNYEQLSKWAANYVAAKIKAANPTAEKPFVLGLPTGSSPLGMYKNLIELNKQGVVSFQNVITFNMDEYVGLPKDHPESYHSFMWNNFFSHIDIKPENVNILNGNAEDLEAECASYEARMKAVGGVDLFLGGIGPDGHIAFNEPGSSLSSRTRIKTLTTDTIIANSRFFDNDVNKVPKTSVTVGVGTVLDAKEVLIMVNGHNKARALQQAVEGAVNQMWTITALQLHPKGIIVCDEAACADLKVGTYNYFKDIEKDHLCPCSLLK</sequence>
<reference key="1">
    <citation type="journal article" date="2007" name="PLoS Biol.">
        <title>Evolution of symbiotic bacteria in the distal human intestine.</title>
        <authorList>
            <person name="Xu J."/>
            <person name="Mahowald M.A."/>
            <person name="Ley R.E."/>
            <person name="Lozupone C.A."/>
            <person name="Hamady M."/>
            <person name="Martens E.C."/>
            <person name="Henrissat B."/>
            <person name="Coutinho P.M."/>
            <person name="Minx P."/>
            <person name="Latreille P."/>
            <person name="Cordum H."/>
            <person name="Van Brunt A."/>
            <person name="Kim K."/>
            <person name="Fulton R.S."/>
            <person name="Fulton L.A."/>
            <person name="Clifton S.W."/>
            <person name="Wilson R.K."/>
            <person name="Knight R.D."/>
            <person name="Gordon J.I."/>
        </authorList>
    </citation>
    <scope>NUCLEOTIDE SEQUENCE [LARGE SCALE GENOMIC DNA]</scope>
    <source>
        <strain>ATCC 8503 / DSM 20701 / CIP 104284 / JCM 5825 / NCTC 11152</strain>
    </source>
</reference>
<name>NAGB_PARD8</name>
<accession>A6LHV2</accession>
<feature type="chain" id="PRO_1000067006" description="Glucosamine-6-phosphate deaminase">
    <location>
        <begin position="1"/>
        <end position="270"/>
    </location>
</feature>
<feature type="active site" description="Proton acceptor; for enolization step" evidence="1">
    <location>
        <position position="72"/>
    </location>
</feature>
<feature type="active site" description="For ring-opening step" evidence="1">
    <location>
        <position position="141"/>
    </location>
</feature>
<feature type="active site" description="Proton acceptor; for ring-opening step" evidence="1">
    <location>
        <position position="143"/>
    </location>
</feature>
<feature type="active site" description="For ring-opening step" evidence="1">
    <location>
        <position position="148"/>
    </location>
</feature>
<feature type="site" description="Part of the allosteric site" evidence="1">
    <location>
        <position position="151"/>
    </location>
</feature>
<feature type="site" description="Part of the allosteric site" evidence="1">
    <location>
        <position position="158"/>
    </location>
</feature>
<feature type="site" description="Part of the allosteric site" evidence="1">
    <location>
        <position position="160"/>
    </location>
</feature>
<feature type="site" description="Part of the allosteric site" evidence="1">
    <location>
        <position position="161"/>
    </location>
</feature>
<feature type="site" description="Part of the allosteric site" evidence="1">
    <location>
        <position position="254"/>
    </location>
</feature>
<dbReference type="EC" id="3.5.99.6" evidence="1"/>
<dbReference type="EMBL" id="CP000140">
    <property type="protein sequence ID" value="ABR45266.1"/>
    <property type="molecule type" value="Genomic_DNA"/>
</dbReference>
<dbReference type="RefSeq" id="WP_005859323.1">
    <property type="nucleotide sequence ID" value="NZ_LR215978.1"/>
</dbReference>
<dbReference type="SMR" id="A6LHV2"/>
<dbReference type="STRING" id="435591.BDI_3568"/>
<dbReference type="PaxDb" id="435591-BDI_3568"/>
<dbReference type="GeneID" id="93523646"/>
<dbReference type="KEGG" id="pdi:BDI_3568"/>
<dbReference type="eggNOG" id="COG0363">
    <property type="taxonomic scope" value="Bacteria"/>
</dbReference>
<dbReference type="HOGENOM" id="CLU_049611_0_1_10"/>
<dbReference type="BioCyc" id="PDIS435591:G1G5A-3661-MONOMER"/>
<dbReference type="UniPathway" id="UPA00629">
    <property type="reaction ID" value="UER00684"/>
</dbReference>
<dbReference type="Proteomes" id="UP000000566">
    <property type="component" value="Chromosome"/>
</dbReference>
<dbReference type="GO" id="GO:0005737">
    <property type="term" value="C:cytoplasm"/>
    <property type="evidence" value="ECO:0007669"/>
    <property type="project" value="TreeGrafter"/>
</dbReference>
<dbReference type="GO" id="GO:0004342">
    <property type="term" value="F:glucosamine-6-phosphate deaminase activity"/>
    <property type="evidence" value="ECO:0007669"/>
    <property type="project" value="UniProtKB-UniRule"/>
</dbReference>
<dbReference type="GO" id="GO:0042802">
    <property type="term" value="F:identical protein binding"/>
    <property type="evidence" value="ECO:0007669"/>
    <property type="project" value="TreeGrafter"/>
</dbReference>
<dbReference type="GO" id="GO:0005975">
    <property type="term" value="P:carbohydrate metabolic process"/>
    <property type="evidence" value="ECO:0007669"/>
    <property type="project" value="InterPro"/>
</dbReference>
<dbReference type="GO" id="GO:0006043">
    <property type="term" value="P:glucosamine catabolic process"/>
    <property type="evidence" value="ECO:0007669"/>
    <property type="project" value="TreeGrafter"/>
</dbReference>
<dbReference type="GO" id="GO:0006046">
    <property type="term" value="P:N-acetylglucosamine catabolic process"/>
    <property type="evidence" value="ECO:0007669"/>
    <property type="project" value="TreeGrafter"/>
</dbReference>
<dbReference type="GO" id="GO:0019262">
    <property type="term" value="P:N-acetylneuraminate catabolic process"/>
    <property type="evidence" value="ECO:0007669"/>
    <property type="project" value="UniProtKB-UniRule"/>
</dbReference>
<dbReference type="CDD" id="cd01399">
    <property type="entry name" value="GlcN6P_deaminase"/>
    <property type="match status" value="1"/>
</dbReference>
<dbReference type="FunFam" id="3.40.50.1360:FF:000002">
    <property type="entry name" value="Glucosamine-6-phosphate deaminase"/>
    <property type="match status" value="1"/>
</dbReference>
<dbReference type="Gene3D" id="3.40.50.1360">
    <property type="match status" value="1"/>
</dbReference>
<dbReference type="HAMAP" id="MF_01241">
    <property type="entry name" value="GlcN6P_deamin"/>
    <property type="match status" value="1"/>
</dbReference>
<dbReference type="InterPro" id="IPR006148">
    <property type="entry name" value="Glc/Gal-6P_isomerase"/>
</dbReference>
<dbReference type="InterPro" id="IPR004547">
    <property type="entry name" value="Glucosamine6P_isomerase"/>
</dbReference>
<dbReference type="InterPro" id="IPR018321">
    <property type="entry name" value="Glucosamine6P_isomerase_CS"/>
</dbReference>
<dbReference type="InterPro" id="IPR037171">
    <property type="entry name" value="NagB/RpiA_transferase-like"/>
</dbReference>
<dbReference type="NCBIfam" id="TIGR00502">
    <property type="entry name" value="nagB"/>
    <property type="match status" value="1"/>
</dbReference>
<dbReference type="PANTHER" id="PTHR11280">
    <property type="entry name" value="GLUCOSAMINE-6-PHOSPHATE ISOMERASE"/>
    <property type="match status" value="1"/>
</dbReference>
<dbReference type="PANTHER" id="PTHR11280:SF5">
    <property type="entry name" value="GLUCOSAMINE-6-PHOSPHATE ISOMERASE"/>
    <property type="match status" value="1"/>
</dbReference>
<dbReference type="Pfam" id="PF01182">
    <property type="entry name" value="Glucosamine_iso"/>
    <property type="match status" value="1"/>
</dbReference>
<dbReference type="SUPFAM" id="SSF100950">
    <property type="entry name" value="NagB/RpiA/CoA transferase-like"/>
    <property type="match status" value="1"/>
</dbReference>
<dbReference type="PROSITE" id="PS01161">
    <property type="entry name" value="GLC_GALNAC_ISOMERASE"/>
    <property type="match status" value="1"/>
</dbReference>
<evidence type="ECO:0000255" key="1">
    <source>
        <dbReference type="HAMAP-Rule" id="MF_01241"/>
    </source>
</evidence>
<comment type="function">
    <text evidence="1">Catalyzes the reversible isomerization-deamination of glucosamine 6-phosphate (GlcN6P) to form fructose 6-phosphate (Fru6P) and ammonium ion.</text>
</comment>
<comment type="catalytic activity">
    <reaction evidence="1">
        <text>alpha-D-glucosamine 6-phosphate + H2O = beta-D-fructose 6-phosphate + NH4(+)</text>
        <dbReference type="Rhea" id="RHEA:12172"/>
        <dbReference type="ChEBI" id="CHEBI:15377"/>
        <dbReference type="ChEBI" id="CHEBI:28938"/>
        <dbReference type="ChEBI" id="CHEBI:57634"/>
        <dbReference type="ChEBI" id="CHEBI:75989"/>
        <dbReference type="EC" id="3.5.99.6"/>
    </reaction>
</comment>
<comment type="activity regulation">
    <text evidence="1">Allosterically activated by N-acetylglucosamine 6-phosphate (GlcNAc6P).</text>
</comment>
<comment type="pathway">
    <text evidence="1">Amino-sugar metabolism; N-acetylneuraminate degradation; D-fructose 6-phosphate from N-acetylneuraminate: step 5/5.</text>
</comment>
<comment type="similarity">
    <text evidence="1">Belongs to the glucosamine/galactosamine-6-phosphate isomerase family. NagB subfamily.</text>
</comment>